<comment type="function">
    <text evidence="3 4 6 8 10">Extended-spectrum beta-lactamase (ESBL) which confers resistance to penicillins, as well as first, second, third and fourth-generation cephalosporins (PubMed:10681329, PubMed:12936982, PubMed:19656947, PubMed:20696873, PubMed:29507065). Has ceftazidime-hydrolyzing activity (PubMed:10681329, PubMed:12936982, PubMed:19656947, PubMed:20696873, PubMed:29507065). Inactive against the carbapenems, imipenem, meropenem, ertapenem and doripenem (PubMed:10681329, PubMed:19656947, PubMed:29507065). However, weak hydrolytic activity with respect to imipenem has also been reported (PubMed:20696873).</text>
</comment>
<comment type="catalytic activity">
    <reaction evidence="3 4 6 8 10">
        <text>a beta-lactam + H2O = a substituted beta-amino acid</text>
        <dbReference type="Rhea" id="RHEA:20401"/>
        <dbReference type="ChEBI" id="CHEBI:15377"/>
        <dbReference type="ChEBI" id="CHEBI:35627"/>
        <dbReference type="ChEBI" id="CHEBI:140347"/>
        <dbReference type="EC" id="3.5.2.6"/>
    </reaction>
</comment>
<comment type="activity regulation">
    <text evidence="3 8 10 12 13">Inhibited by the beta-lactamase-blocking agents clavulanic acid, tazobactam, sulbactam and tazobactam and the carbapenem, imipenem (PubMed:10681329, PubMed:20696873, PubMed:29507065). Inhibition by imipenem may involve Gly-165 (PubMed:19656947, PubMed:23148776).</text>
</comment>
<comment type="biophysicochemical properties">
    <kinetics>
        <KM evidence="3">40 uM for benzylpenicillin (at pH 7.0 and 30 degrees Celsius)</KM>
        <KM evidence="10">210 uM for benzylpenicillin (at pH 7.0 and 25 degrees Celsius)</KM>
        <KM evidence="8">120 uM for benzylpenicillin (at pH 7.0 and 25 degrees Celsius)</KM>
        <KM evidence="10">260 uM for ampicillin (at pH 7.0 and 25 degrees Celsius)</KM>
        <KM evidence="3">200 uM for amoxicillin (at pH 7.0 and 30 degrees Celsius)</KM>
        <KM evidence="3">400 uM for ticarcillin (at pH 7.0 and 30 degrees Celsius)</KM>
        <KM evidence="3">900 uM for piperacillin (at pH 7.0 and 30 degrees Celsius)</KM>
        <KM evidence="10">1400 uM for piperacillin (at pH 7.0 and 25 degrees Celsius)</KM>
        <KM evidence="10">1250 uM for carbenicillin (at pH 7.0 and 25 degrees Celsius)</KM>
        <KM evidence="10">1440 uM for cefazolin (at pH 7.0 and 25 degrees Celsius)</KM>
        <KM evidence="3">3400 uM for cephalothin (at pH 7.0 and 30 degrees Celsius)</KM>
        <KM evidence="8">88 uM for cephalothin (at pH 7.0 and 25 degrees Celsius)</KM>
        <KM evidence="3">2000 uM for cephaloridine (at pH 7.0 and 30 degrees Celsius)</KM>
        <KM evidence="3">4600 uM for cefotaxime (at pH 7.0 and 30 degrees Celsius)</KM>
        <KM evidence="8">152 uM for cefotaxime (at pH 7.0 and 25 degrees Celsius)</KM>
        <KM evidence="3">30 uM for cefoxitin (at pH 7.0 and 30 degrees Celsius)</KM>
        <KM evidence="3">1800 uM for cefepime (at pH 7.0 and 30 degrees Celsius)</KM>
        <KM evidence="3">2000 uM for ceftazidime (at pH 7.0 and 30 degrees Celsius)</KM>
        <KM evidence="8">137 uM for ceftazidime (at pH 7.0 and 25 degrees Celsius)</KM>
        <KM evidence="10">330 uM for nitrocefin (at pH 7.0 and 25 degrees Celsius)</KM>
        <KM evidence="3">45 uM for imipenem (at pH 7.0 and 30 degrees Celsius)</KM>
        <KM evidence="6">1.9 uM for imipenem (at pH 7.0)</KM>
        <KM evidence="8">1.2 uM for imipenem (at pH 7.0 and 25 degrees Celsius)</KM>
        <text evidence="3 6 8 10">kcat is 2.8 sec(-1) with benzylpenicillin as substrate (at pH 7.0 and 30 degrees Celsius) (PubMed:10681329). kcat is 117 sec(-1) with benzylpenicillin as substrate (at pH 7.0 and 25 degrees Celsius) (PubMed:29507065). kcat is 30 sec(-1) with benzylpenicillin as substrate (at pH 7.0 and 25 degrees Celsius) (PubMed:20696873). kcat is 236 sec(-1) with ampicillin as substrate (at pH 7.0 and 25 degrees Celsius) (PubMed:29507065). kcat is 13 sec(-1) with amoxicillin as substrate (at pH 7.0 and 30 degrees Celsius) (PubMed:10681329). kcat is 0.3 sec(-1) with ticarcillin as substrate (at pH 7.0 and 30 degrees Celsius) (PubMed:10681329). kcat is 8 sec(-1) with piperacillin as substrate (at pH 7.0 and 30 degrees Celsius) (PubMed:10681329). kcat is 184 sec(-1) with piperacillin as substrate (at pH 7.0 and 25 degrees Celsius) (PubMed:29507065). kcat is 41 sec(-1) with carbenicillin as substrate (at pH 7.0 and 25 degrees Celsius) (PubMed:29507065). kcat is 375 sec(-1) with cefazolin as substrate (at pH 7.0 and 25 degrees Celsius) (PubMed:29507065). kcat is 168 sec(-1) with nitrocefin as substrate (at pH 7.0 and 25 degrees Celsius) (PubMed:29507065). kcat is 218 sec(-1) with cephalothin as substrate (at pH 7.0 and 25 degrees Celsius) (PubMed:20696873). kcat is 179 sec(-1) with cephalothin as substrate (at pH 7.0 and 30 degrees Celsius) (PubMed:10681329). kcat is 53 sec(-1) with cephaloridine as substrate (at pH 7.0 and 30 degrees Celsius) (PubMed:10681329). kcat is 68 sec(-1) with cefotaxime as substrate (at pH 7.0 and 30 degrees Celsius) (PubMed:10681329). kcat is 57 sec(-1) with cefotaxime as substrate (at pH 7.0 and 25 degrees Celsius) (PubMed:20696873). kcat is 0.9 sec(-1) with cefoxitin as substrate (at pH 7.0 and 30 degrees Celsius) (PubMed:10681329). kcat is 2.8 sec(-1) with cefepime as substrate (at pH 7.0 and 30 degrees Celsius) (PubMed:10681329). kcat is 380 sec(-1) with ceftazidime as substrate (at pH 7.0 and 30 degrees Celsius) (PubMed:10681329). kcat is 10.5 sec(-1) with ceftazidime as substrate (at pH 7.0 and 25 degrees Celsius) (PubMed:20696873). kcat is 0.003 sec(-1) with imipenem as substrate (at pH 7.0 and 30 degrees Celsius) (PubMed:10681329). kcat is 0.006 sec(-1) with imipenem as substrate (at pH 7.0) (PubMed:19656947). kcat is 0.006 sec(-1) with imipenem as substrate (at pH 7.0 and 25 degrees Celsius) (PubMed:20696873).</text>
    </kinetics>
</comment>
<comment type="subunit">
    <text evidence="5">Monomer (PubMed:17704567). May form dimers (PubMed:17704567).</text>
</comment>
<comment type="miscellaneous">
    <text evidence="7">The class A beta-lactamase family has a specific amino-acid numbering system, sometimes called Ambler or ABL numbering and often misspelt as Amber (PubMed:2039479). A multiple sequence alignment was used to derive a consensus sequence and then the consensus was numbered taking into account insertions and deletions (PubMed:2039479). This allows use of identical numbers, e.g. for active site residues, despite differences in protein length (PubMed:2039479). UniProt always uses natural numbering of residues, hence there appear to be differences in numbering between this entry and some papers (PubMed:2039479).</text>
</comment>
<comment type="similarity">
    <text evidence="14">Belongs to the class-A beta-lactamase family.</text>
</comment>
<dbReference type="EC" id="3.5.2.6" evidence="3 4 6 8 10"/>
<dbReference type="EMBL" id="AF156486">
    <property type="protein sequence ID" value="AAF27723.1"/>
    <property type="molecule type" value="Genomic_DNA"/>
</dbReference>
<dbReference type="EMBL" id="AY219651">
    <property type="protein sequence ID" value="AAO32356.1"/>
    <property type="molecule type" value="Genomic_DNA"/>
</dbReference>
<dbReference type="PDB" id="2QPN">
    <property type="method" value="X-ray"/>
    <property type="resolution" value="1.10 A"/>
    <property type="chains" value="A/B=1-287"/>
</dbReference>
<dbReference type="PDB" id="4GOG">
    <property type="method" value="X-ray"/>
    <property type="resolution" value="1.10 A"/>
    <property type="chains" value="A/B=1-287"/>
</dbReference>
<dbReference type="PDBsum" id="2QPN"/>
<dbReference type="PDBsum" id="4GOG"/>
<dbReference type="SMR" id="Q9KJY7"/>
<dbReference type="CARD" id="ARO:3002330">
    <property type="molecule name" value="GES-1"/>
    <property type="mechanism identifier" value="ARO:0001004"/>
    <property type="mechanism name" value="antibiotic inactivation"/>
</dbReference>
<dbReference type="KEGG" id="ag:AAF27723"/>
<dbReference type="EvolutionaryTrace" id="Q9KJY7"/>
<dbReference type="GO" id="GO:0008800">
    <property type="term" value="F:beta-lactamase activity"/>
    <property type="evidence" value="ECO:0007669"/>
    <property type="project" value="UniProtKB-EC"/>
</dbReference>
<dbReference type="GO" id="GO:0030655">
    <property type="term" value="P:beta-lactam antibiotic catabolic process"/>
    <property type="evidence" value="ECO:0007669"/>
    <property type="project" value="InterPro"/>
</dbReference>
<dbReference type="GO" id="GO:0046677">
    <property type="term" value="P:response to antibiotic"/>
    <property type="evidence" value="ECO:0007669"/>
    <property type="project" value="UniProtKB-KW"/>
</dbReference>
<dbReference type="Gene3D" id="3.40.710.10">
    <property type="entry name" value="DD-peptidase/beta-lactamase superfamily"/>
    <property type="match status" value="1"/>
</dbReference>
<dbReference type="InterPro" id="IPR012338">
    <property type="entry name" value="Beta-lactam/transpept-like"/>
</dbReference>
<dbReference type="InterPro" id="IPR045155">
    <property type="entry name" value="Beta-lactam_cat"/>
</dbReference>
<dbReference type="InterPro" id="IPR000871">
    <property type="entry name" value="Beta-lactam_class-A"/>
</dbReference>
<dbReference type="NCBIfam" id="NF033103">
    <property type="entry name" value="bla_class_A"/>
    <property type="match status" value="1"/>
</dbReference>
<dbReference type="NCBIfam" id="NF012103">
    <property type="entry name" value="blaGES"/>
    <property type="match status" value="1"/>
</dbReference>
<dbReference type="PANTHER" id="PTHR35333">
    <property type="entry name" value="BETA-LACTAMASE"/>
    <property type="match status" value="1"/>
</dbReference>
<dbReference type="PANTHER" id="PTHR35333:SF3">
    <property type="entry name" value="BETA-LACTAMASE-TYPE TRANSPEPTIDASE FOLD CONTAINING PROTEIN"/>
    <property type="match status" value="1"/>
</dbReference>
<dbReference type="Pfam" id="PF13354">
    <property type="entry name" value="Beta-lactamase2"/>
    <property type="match status" value="1"/>
</dbReference>
<dbReference type="PRINTS" id="PR00118">
    <property type="entry name" value="BLACTAMASEA"/>
</dbReference>
<dbReference type="SUPFAM" id="SSF56601">
    <property type="entry name" value="beta-lactamase/transpeptidase-like"/>
    <property type="match status" value="1"/>
</dbReference>
<protein>
    <recommendedName>
        <fullName evidence="11">Beta-lactamase GES-1</fullName>
        <ecNumber evidence="3 4 6 8 10">3.5.2.6</ecNumber>
    </recommendedName>
    <alternativeName>
        <fullName evidence="11">Guiana extended spectrum beta-lactamase 1</fullName>
    </alternativeName>
</protein>
<keyword id="KW-0002">3D-structure</keyword>
<keyword id="KW-0046">Antibiotic resistance</keyword>
<keyword id="KW-1015">Disulfide bond</keyword>
<keyword id="KW-0378">Hydrolase</keyword>
<keyword id="KW-0614">Plasmid</keyword>
<keyword id="KW-0732">Signal</keyword>
<evidence type="ECO:0000250" key="1">
    <source>
        <dbReference type="UniProtKB" id="A0A5R8T042"/>
    </source>
</evidence>
<evidence type="ECO:0000255" key="2"/>
<evidence type="ECO:0000269" key="3">
    <source>
    </source>
</evidence>
<evidence type="ECO:0000269" key="4">
    <source>
    </source>
</evidence>
<evidence type="ECO:0000269" key="5">
    <source>
    </source>
</evidence>
<evidence type="ECO:0000269" key="6">
    <source>
    </source>
</evidence>
<evidence type="ECO:0000269" key="7">
    <source>
    </source>
</evidence>
<evidence type="ECO:0000269" key="8">
    <source>
    </source>
</evidence>
<evidence type="ECO:0000269" key="9">
    <source>
    </source>
</evidence>
<evidence type="ECO:0000269" key="10">
    <source>
    </source>
</evidence>
<evidence type="ECO:0000303" key="11">
    <source>
    </source>
</evidence>
<evidence type="ECO:0000303" key="12">
    <source>
    </source>
</evidence>
<evidence type="ECO:0000303" key="13">
    <source>
    </source>
</evidence>
<evidence type="ECO:0000305" key="14"/>
<evidence type="ECO:0000312" key="15">
    <source>
        <dbReference type="EMBL" id="AAF27723.1"/>
    </source>
</evidence>
<evidence type="ECO:0000312" key="16">
    <source>
        <dbReference type="EMBL" id="AAO32356.1"/>
    </source>
</evidence>
<evidence type="ECO:0007744" key="17">
    <source>
        <dbReference type="PDB" id="2QPN"/>
    </source>
</evidence>
<evidence type="ECO:0007744" key="18">
    <source>
        <dbReference type="PDB" id="4GOG"/>
    </source>
</evidence>
<evidence type="ECO:0007829" key="19">
    <source>
        <dbReference type="PDB" id="2QPN"/>
    </source>
</evidence>
<evidence type="ECO:0007829" key="20">
    <source>
        <dbReference type="PDB" id="4GOG"/>
    </source>
</evidence>
<gene>
    <name evidence="15" type="primary">ges-1</name>
    <name evidence="16" type="synonym">blaGES-1</name>
</gene>
<accession>Q9KJY7</accession>
<organism evidence="15">
    <name type="scientific">Klebsiella pneumoniae</name>
    <dbReference type="NCBI Taxonomy" id="573"/>
    <lineage>
        <taxon>Bacteria</taxon>
        <taxon>Pseudomonadati</taxon>
        <taxon>Pseudomonadota</taxon>
        <taxon>Gammaproteobacteria</taxon>
        <taxon>Enterobacterales</taxon>
        <taxon>Enterobacteriaceae</taxon>
        <taxon>Klebsiella/Raoultella group</taxon>
        <taxon>Klebsiella</taxon>
        <taxon>Klebsiella pneumoniae complex</taxon>
    </lineage>
</organism>
<name>BLAG1_KLEPN</name>
<feature type="signal peptide" evidence="2">
    <location>
        <begin position="1"/>
        <end position="18"/>
    </location>
</feature>
<feature type="chain" id="PRO_5007716992" description="Beta-lactamase GES-1" evidence="2">
    <location>
        <begin position="19"/>
        <end position="287"/>
    </location>
</feature>
<feature type="active site" description="Nucleophile; acyl-ester intermediate" evidence="1">
    <location>
        <position position="64"/>
    </location>
</feature>
<feature type="binding site" evidence="1">
    <location>
        <position position="67"/>
    </location>
    <ligand>
        <name>a beta-lactam</name>
        <dbReference type="ChEBI" id="CHEBI:35627"/>
    </ligand>
</feature>
<feature type="binding site" evidence="1">
    <location>
        <position position="125"/>
    </location>
    <ligand>
        <name>a beta-lactam</name>
        <dbReference type="ChEBI" id="CHEBI:35627"/>
    </ligand>
</feature>
<feature type="binding site" evidence="1">
    <location>
        <position position="161"/>
    </location>
    <ligand>
        <name>a beta-lactam</name>
        <dbReference type="ChEBI" id="CHEBI:35627"/>
    </ligand>
</feature>
<feature type="binding site" evidence="1">
    <location>
        <position position="232"/>
    </location>
    <ligand>
        <name>a beta-lactam</name>
        <dbReference type="ChEBI" id="CHEBI:35627"/>
    </ligand>
</feature>
<feature type="disulfide bond" evidence="5 9 17 18">
    <location>
        <begin position="63"/>
        <end position="233"/>
    </location>
</feature>
<feature type="mutagenesis site" description="Increases catalytic efficiency about 25-fold, with respect to ceftazidime. Increases resistance to ceftazidime about 30-fold, and to aztreonam about 20-fold, in DH5alpha E.coli strain. Increases catalytic efficiency about 8-fold, with respect to imipenem; when associated with Ser-165. Facilitates hydrolysis of cefoxitin and aztreonam, which are undetectable in wild-type; when associated with Ser-165. Reduces catalytic efficiency with respect to benzylpenicillin and cephalothin; when associated with Asn-165. Increases resistance to aztreonam about 20-fold in DH5alpha E.coli strain; when associated with Asn-165. Increases resistance to cefoxitin about 16-fold in DH5alpha E.coli strain; when associated with Ser-165." evidence="8">
    <original>E</original>
    <variation>K</variation>
    <location>
        <position position="98"/>
    </location>
</feature>
<feature type="mutagenesis site" description="Increases catalytic efficiency about 4-fold, with respect to the carbapenem antibiotic, imipenem. Reduces catalytic efficiency with respect to penicillins and cephalosporins. Decreases resistance to ceftazidime about 16-fold, in DH5alpha E.coli strain. Reduces catalytic efficiency with respect to benzylpenicillin and cephalothin; when associated with Lys-98. Increases resistance to aztreonam about 20-fold in DH5alpha E.coli strain; when associated with Lys-98." evidence="8">
    <original>G</original>
    <variation>N</variation>
    <location>
        <position position="165"/>
    </location>
</feature>
<feature type="mutagenesis site" description="Increases catalytic efficiency about 50-fold, with respect to imipenem. Decreases resistance to ceftazidime about 10-fold, in DH5alpha E.coli strain. Increases catalytic efficiency about 8-fold, with respect to imipenem; when associated with Lys-98. Facilitates hydrolysis of cefoxitin and aztreonam, which are undetectable in wild-type; when associated with Lys-98. Increases resistance to cefoxitin about 16-fold in DH5alpha E.coli strain; when associated with Lys-98." evidence="8">
    <original>G</original>
    <variation>S</variation>
    <location>
        <position position="165"/>
    </location>
</feature>
<feature type="mutagenesis site" description="Increases catalytic efficiency up to 100-fold, with respect to imipenem and meropenem. Reduces resistance to cefotaxime about 8-fold in BL21(DE3) E.coli strain. Reduces resistance to aztreonam about 4-fold in BL21(DE3) E.coli strain. Increases resistance to ertapenem about 8-fold in BL21(DE3) E.coli strain. Increases resistance to meropenem about 4-fold in BL21(DE3) E.coli strain. Reduces resistance to combined amoxicillin and clavulanic acid about 4-fold in BL21(DE3) E.coli strain." evidence="10">
    <original>P</original>
    <variation>E</variation>
    <location>
        <position position="169"/>
    </location>
</feature>
<feature type="helix" evidence="19">
    <location>
        <begin position="22"/>
        <end position="35"/>
    </location>
</feature>
<feature type="strand" evidence="19">
    <location>
        <begin position="38"/>
        <end position="44"/>
    </location>
</feature>
<feature type="strand" evidence="19">
    <location>
        <begin position="50"/>
        <end position="55"/>
    </location>
</feature>
<feature type="helix" evidence="19">
    <location>
        <begin position="63"/>
        <end position="66"/>
    </location>
</feature>
<feature type="helix" evidence="19">
    <location>
        <begin position="67"/>
        <end position="79"/>
    </location>
</feature>
<feature type="strand" evidence="20">
    <location>
        <begin position="81"/>
        <end position="83"/>
    </location>
</feature>
<feature type="strand" evidence="19">
    <location>
        <begin position="88"/>
        <end position="90"/>
    </location>
</feature>
<feature type="helix" evidence="19">
    <location>
        <begin position="93"/>
        <end position="95"/>
    </location>
</feature>
<feature type="helix" evidence="19">
    <location>
        <begin position="101"/>
        <end position="106"/>
    </location>
</feature>
<feature type="turn" evidence="19">
    <location>
        <begin position="107"/>
        <end position="110"/>
    </location>
</feature>
<feature type="strand" evidence="19">
    <location>
        <begin position="111"/>
        <end position="113"/>
    </location>
</feature>
<feature type="helix" evidence="19">
    <location>
        <begin position="114"/>
        <end position="124"/>
    </location>
</feature>
<feature type="helix" evidence="19">
    <location>
        <begin position="127"/>
        <end position="137"/>
    </location>
</feature>
<feature type="helix" evidence="19">
    <location>
        <begin position="139"/>
        <end position="149"/>
    </location>
</feature>
<feature type="helix" evidence="19">
    <location>
        <begin position="163"/>
        <end position="165"/>
    </location>
</feature>
<feature type="helix" evidence="19">
    <location>
        <begin position="178"/>
        <end position="189"/>
    </location>
</feature>
<feature type="strand" evidence="19">
    <location>
        <begin position="191"/>
        <end position="194"/>
    </location>
</feature>
<feature type="helix" evidence="19">
    <location>
        <begin position="196"/>
        <end position="207"/>
    </location>
</feature>
<feature type="helix" evidence="19">
    <location>
        <begin position="216"/>
        <end position="219"/>
    </location>
</feature>
<feature type="strand" evidence="19">
    <location>
        <begin position="224"/>
        <end position="233"/>
    </location>
</feature>
<feature type="turn" evidence="19">
    <location>
        <begin position="234"/>
        <end position="236"/>
    </location>
</feature>
<feature type="strand" evidence="19">
    <location>
        <begin position="237"/>
        <end position="246"/>
    </location>
</feature>
<feature type="strand" evidence="19">
    <location>
        <begin position="249"/>
        <end position="258"/>
    </location>
</feature>
<feature type="helix" evidence="19">
    <location>
        <begin position="264"/>
        <end position="284"/>
    </location>
</feature>
<proteinExistence type="evidence at protein level"/>
<reference evidence="15" key="1">
    <citation type="journal article" date="2000" name="Antimicrob. Agents Chemother.">
        <title>Biochemical sequence analyses of GES-1, a novel class A extended-spectrum beta-lactamase, and the class 1 integron In52 from Klebsiella pneumoniae.</title>
        <authorList>
            <person name="Poirel L."/>
            <person name="Le Thomas I."/>
            <person name="Naas T."/>
            <person name="Karim A."/>
            <person name="Nordmann P."/>
        </authorList>
    </citation>
    <scope>NUCLEOTIDE SEQUENCE [GENOMIC DNA]</scope>
    <scope>FUNCTION</scope>
    <scope>CATALYTIC ACTIVITY</scope>
    <scope>ACTIVITY REGULATION</scope>
    <scope>BIOPHYSICOCHEMICAL PROPERTIES</scope>
    <source>
        <strain evidence="15">G1</strain>
        <plasmid evidence="11">pTK1</plasmid>
    </source>
</reference>
<reference evidence="16" key="2">
    <citation type="journal article" date="2003" name="Antimicrob. Agents Chemother.">
        <title>Molecular characterization of a new class 3 integron in Klebsiella pneumoniae.</title>
        <authorList>
            <person name="Correia M."/>
            <person name="Boavida F."/>
            <person name="Grosso F."/>
            <person name="Salgado M.J."/>
            <person name="Lito L.M."/>
            <person name="Cristino J.M."/>
            <person name="Mendo S."/>
            <person name="Duarte A."/>
        </authorList>
    </citation>
    <scope>NUCLEOTIDE SEQUENCE [GENOMIC DNA]</scope>
    <scope>FUNCTION</scope>
    <scope>CATALYTIC ACTIVITY</scope>
    <source>
        <plasmid evidence="16">p22K9</plasmid>
    </source>
</reference>
<reference evidence="16" key="3">
    <citation type="submission" date="2003-01" db="EMBL/GenBank/DDBJ databases">
        <authorList>
            <person name="Yang G."/>
            <person name="Zhao X."/>
            <person name="Li B."/>
            <person name="Liu J."/>
            <person name="Zheng Q."/>
            <person name="Tong Y."/>
            <person name="Li Z."/>
        </authorList>
    </citation>
    <scope>NUCLEOTIDE SEQUENCE [GENOMIC DNA]</scope>
    <source>
        <plasmid evidence="16">p22K9</plasmid>
    </source>
</reference>
<reference evidence="14" key="4">
    <citation type="journal article" date="1991" name="Biochem. J.">
        <title>A standard numbering scheme for the class A beta-lactamases.</title>
        <authorList>
            <person name="Ambler R.P."/>
            <person name="Coulson A.F."/>
            <person name="Frere J.M."/>
            <person name="Ghuysen J.M."/>
            <person name="Joris B."/>
            <person name="Forsman M."/>
            <person name="Levesque R.C."/>
            <person name="Tiraby G."/>
            <person name="Waley S.G."/>
        </authorList>
    </citation>
    <scope>NOMENCLATURE</scope>
</reference>
<reference evidence="14" key="5">
    <citation type="journal article" date="2009" name="J. Biol. Chem.">
        <title>Mechanistic basis for the emergence of catalytic competence against carbapenem antibiotics by the GES family of beta-lactamases.</title>
        <authorList>
            <person name="Frase H."/>
            <person name="Shi Q."/>
            <person name="Testero S.A."/>
            <person name="Mobashery S."/>
            <person name="Vakulenko S.B."/>
        </authorList>
    </citation>
    <scope>FUNCTION</scope>
    <scope>CATALYTIC ACTIVITY</scope>
    <scope>ACTIVITY REGULATION</scope>
    <scope>BIOPHYSICOCHEMICAL PROPERTIES</scope>
</reference>
<reference evidence="14" key="6">
    <citation type="journal article" date="2010" name="Antimicrob. Agents Chemother.">
        <title>Comparative biochemical and computational study of the role of naturally occurring mutations at Ambler positions 104 and 170 in GES beta-lactamases.</title>
        <authorList>
            <person name="Kotsakis S.D."/>
            <person name="Miriagou V."/>
            <person name="Tzelepi E."/>
            <person name="Tzouvelekis L.S."/>
        </authorList>
    </citation>
    <scope>FUNCTION</scope>
    <scope>CATALYTIC ACTIVITY</scope>
    <scope>ACTIVITY REGULATION</scope>
    <scope>BIOPHYSICOCHEMICAL PROPERTIES</scope>
    <scope>MUTAGENESIS OF GLU-98 AND GLY-165</scope>
</reference>
<reference evidence="14" key="7">
    <citation type="journal article" date="2018" name="Antimicrob. Agents Chemother.">
        <title>P174E Substitution in GES-1 and GES-5 beta-Lactamases Improves Catalytic Efficiency toward Carbapenems.</title>
        <authorList>
            <person name="Piccirilli A."/>
            <person name="Mercuri P.S."/>
            <person name="Galleni M."/>
            <person name="Aschi M."/>
            <person name="Matagne A."/>
            <person name="Amicosante G."/>
            <person name="Perilli M."/>
        </authorList>
    </citation>
    <scope>FUNCTION</scope>
    <scope>CATALYTIC ACTIVITY</scope>
    <scope>ACTIVITY REGULATION</scope>
    <scope>BIOPHYSICOCHEMICAL PROPERTIES</scope>
    <scope>MUTAGENESIS OF PRO-169</scope>
</reference>
<reference evidence="17" key="8">
    <citation type="journal article" date="2007" name="Acta Crystallogr. D">
        <title>Structure of GES-1 at atomic resolution: insights into the evolution of carbapenamase activity in the class A extended-spectrum beta-lactamases.</title>
        <authorList>
            <person name="Smith C.A."/>
            <person name="Caccamo M."/>
            <person name="Kantardjieff K.A."/>
            <person name="Vakulenko S."/>
        </authorList>
    </citation>
    <scope>X-RAY CRYSTALLOGRAPHY (1.10 ANGSTROMS)</scope>
    <scope>SUBUNIT</scope>
    <scope>DISULFIDE BOND</scope>
</reference>
<reference evidence="18" key="9">
    <citation type="journal article" date="2012" name="J. Am. Chem. Soc.">
        <title>Structural basis for progression toward the carbapenemase activity in the GES family of beta-lactamases.</title>
        <authorList>
            <person name="Smith C.A."/>
            <person name="Frase H."/>
            <person name="Toth M."/>
            <person name="Kumarasiri M."/>
            <person name="Wiafe K."/>
            <person name="Munoz J."/>
            <person name="Mobashery S."/>
            <person name="Vakulenko S.B."/>
        </authorList>
    </citation>
    <scope>X-RAY CRYSTALLOGRAPHY (1.10 ANGSTROMS) IN COMPLEX WITH IMIPENEM</scope>
    <scope>DISULFIDE BOND</scope>
</reference>
<geneLocation type="plasmid" evidence="16">
    <name>p22K9</name>
</geneLocation>
<geneLocation type="plasmid" evidence="11">
    <name>pTK1</name>
</geneLocation>
<sequence length="287" mass="31154">MRFIHALLLAGIAHSAYASEKLTFKTDLEKLEREKAAQIGVAIVDPQGEIVAGHRMAQRFAMCSTFKFPLAALVFERIDSGTERGDRKLSYGPDMIVEWSPATERFLASGHMTVLEAAQAAVQLSDNGATNLLLREIGGPAAMTQYFRKIGDSVSRLDRKEPEMGDNTPGDLRDTTTPIAMARTVAKVLYGGALTSTSTHTIERWLIGNQTGDATLRAGFPKDWVVGEKTGTCANGGRNDIGFFKAQERDYAVAVYTTAPKLSAVERDELVASVGQVITQLILSTDK</sequence>